<keyword id="KW-0002">3D-structure</keyword>
<keyword id="KW-0007">Acetylation</keyword>
<keyword id="KW-0903">Direct protein sequencing</keyword>
<keyword id="KW-0488">Methylation</keyword>
<keyword id="KW-1185">Reference proteome</keyword>
<keyword id="KW-0687">Ribonucleoprotein</keyword>
<keyword id="KW-0689">Ribosomal protein</keyword>
<name>RL7_ECOLI</name>
<gene>
    <name evidence="1" type="primary">rplL</name>
    <name type="ordered locus">b3986</name>
    <name type="ordered locus">JW3949</name>
</gene>
<comment type="function">
    <text evidence="4 5">The binding site for several of the GTPase factors involved in protein synthesis (IF-2, EF-Tu, EF-G and RF3). Is thus essential for accurate translation. Deletion of 1 of the L12 dimers from the ribosome (by deleting the binding site on L10) leads to decreased IF-2 association with the 70S ribosome and decreased stimulation of the GTPase activity of EF-G.</text>
</comment>
<comment type="subunit">
    <text evidence="3 4">Homodimer. Part of the 50S ribosomal subunit; present in 4 copies per ribosome. L7/L12 forms dimers with an elongated shape. Two dimers associate with a copy of L10 to form part of the ribosomal stalk (called L8). The ribosomal stalk helps the ribosome interact with GTP-bound translation factors. Forms a pentameric L10(L12)2(L12)2 complex, where L10 forms an elongated spine to which 2 L12 dimers bind in a sequential fashion.</text>
</comment>
<comment type="interaction">
    <interactant intactId="EBI-543702">
        <id>P0A7K2</id>
    </interactant>
    <interactant intactId="EBI-547513">
        <id>P0ACJ8</id>
        <label>crp</label>
    </interactant>
    <organismsDiffer>false</organismsDiffer>
    <experiments>2</experiments>
</comment>
<comment type="interaction">
    <interactant intactId="EBI-543702">
        <id>P0A7K2</id>
    </interactant>
    <interactant intactId="EBI-549111">
        <id>P10443</id>
        <label>dnaE</label>
    </interactant>
    <organismsDiffer>false</organismsDiffer>
    <experiments>3</experiments>
</comment>
<comment type="interaction">
    <interactant intactId="EBI-543702">
        <id>P0A7K2</id>
    </interactant>
    <interactant intactId="EBI-543669">
        <id>P0AB74</id>
        <label>kbaY</label>
    </interactant>
    <organismsDiffer>false</organismsDiffer>
    <experiments>2</experiments>
</comment>
<comment type="interaction">
    <interactant intactId="EBI-543702">
        <id>P0A7K2</id>
    </interactant>
    <interactant intactId="EBI-554366">
        <id>P30748</id>
        <label>moaD</label>
    </interactant>
    <organismsDiffer>false</organismsDiffer>
    <experiments>2</experiments>
</comment>
<comment type="interaction">
    <interactant intactId="EBI-543702">
        <id>P0A7K2</id>
    </interactant>
    <interactant intactId="EBI-562488">
        <id>P0A6Z6</id>
        <label>nikR</label>
    </interactant>
    <organismsDiffer>false</organismsDiffer>
    <experiments>3</experiments>
</comment>
<comment type="interaction">
    <interactant intactId="EBI-543702">
        <id>P0A7K2</id>
    </interactant>
    <interactant intactId="EBI-370839">
        <id>P42641</id>
        <label>obgE</label>
    </interactant>
    <organismsDiffer>false</organismsDiffer>
    <experiments>3</experiments>
</comment>
<comment type="interaction">
    <interactant intactId="EBI-543702">
        <id>P0A7K2</id>
    </interactant>
    <interactant intactId="EBI-878544">
        <id>P0AFI2</id>
        <label>parC</label>
    </interactant>
    <organismsDiffer>false</organismsDiffer>
    <experiments>3</experiments>
</comment>
<comment type="interaction">
    <interactant intactId="EBI-543702">
        <id>P0A7K2</id>
    </interactant>
    <interactant intactId="EBI-560455">
        <id>P24188</id>
        <label>trhO</label>
    </interactant>
    <organismsDiffer>false</organismsDiffer>
    <experiments>3</experiments>
</comment>
<comment type="interaction">
    <interactant intactId="EBI-543702">
        <id>P0A7K2</id>
    </interactant>
    <interactant intactId="EBI-561722">
        <id>P39177</id>
        <label>uspG</label>
    </interactant>
    <organismsDiffer>false</organismsDiffer>
    <experiments>3</experiments>
</comment>
<comment type="interaction">
    <interactant intactId="EBI-543702">
        <id>P0A7K2</id>
    </interactant>
    <interactant intactId="EBI-544472">
        <id>P75874</id>
        <label>yccU</label>
    </interactant>
    <organismsDiffer>false</organismsDiffer>
    <experiments>2</experiments>
</comment>
<comment type="PTM">
    <text>Acetylation of Ser-2 converts L12 to L7.</text>
</comment>
<comment type="PTM">
    <text evidence="6">Lys-82 was found to be 50% monomethylated.</text>
</comment>
<comment type="mass spectrometry">
    <text>Non-methylated.</text>
</comment>
<comment type="mass spectrometry">
    <text>Isolated L10(L12)4.</text>
</comment>
<comment type="mass spectrometry">
    <text>L7, acetylated Ser-2.</text>
</comment>
<comment type="mass spectrometry">
    <text>L12, unacetylated.</text>
</comment>
<comment type="miscellaneous">
    <text evidence="7">Ribosomal protein L8 appears to be an aggregate of ribosomal proteins L7/L12 and L10.</text>
</comment>
<comment type="similarity">
    <text evidence="1">Belongs to the bacterial ribosomal protein bL12 family.</text>
</comment>
<reference key="1">
    <citation type="journal article" date="1979" name="Proc. Natl. Acad. Sci. U.S.A.">
        <title>Nucleotide sequence of the ribosomal protein gene cluster adjacent to the gene for RNA polymerase subunit beta in Escherichia coli.</title>
        <authorList>
            <person name="Post L.E."/>
            <person name="Strycharz G.D."/>
            <person name="Nomura M."/>
            <person name="Lewis H."/>
            <person name="Dennis P.P."/>
        </authorList>
    </citation>
    <scope>NUCLEOTIDE SEQUENCE [GENOMIC DNA]</scope>
</reference>
<reference key="2">
    <citation type="journal article" date="1979" name="Bioorg. Khim.">
        <title>Sequence determination in 3'-end proximalely labelled DNA.</title>
        <authorList>
            <person name="Gurevich A.I."/>
            <person name="Avakov A.E."/>
        </authorList>
    </citation>
    <scope>NUCLEOTIDE SEQUENCE [GENOMIC DNA]</scope>
</reference>
<reference key="3">
    <citation type="journal article" date="1993" name="Nucleic Acids Res.">
        <title>Analysis of the Escherichia coli genome. IV. DNA sequence of the region from 89.2 to 92.8 minutes.</title>
        <authorList>
            <person name="Blattner F.R."/>
            <person name="Burland V.D."/>
            <person name="Plunkett G. III"/>
            <person name="Sofia H.J."/>
            <person name="Daniels D.L."/>
        </authorList>
    </citation>
    <scope>NUCLEOTIDE SEQUENCE [LARGE SCALE GENOMIC DNA]</scope>
    <source>
        <strain>K12 / MG1655 / ATCC 47076</strain>
    </source>
</reference>
<reference key="4">
    <citation type="journal article" date="1997" name="Science">
        <title>The complete genome sequence of Escherichia coli K-12.</title>
        <authorList>
            <person name="Blattner F.R."/>
            <person name="Plunkett G. III"/>
            <person name="Bloch C.A."/>
            <person name="Perna N.T."/>
            <person name="Burland V."/>
            <person name="Riley M."/>
            <person name="Collado-Vides J."/>
            <person name="Glasner J.D."/>
            <person name="Rode C.K."/>
            <person name="Mayhew G.F."/>
            <person name="Gregor J."/>
            <person name="Davis N.W."/>
            <person name="Kirkpatrick H.A."/>
            <person name="Goeden M.A."/>
            <person name="Rose D.J."/>
            <person name="Mau B."/>
            <person name="Shao Y."/>
        </authorList>
    </citation>
    <scope>NUCLEOTIDE SEQUENCE [LARGE SCALE GENOMIC DNA]</scope>
    <source>
        <strain>K12 / MG1655 / ATCC 47076</strain>
    </source>
</reference>
<reference key="5">
    <citation type="journal article" date="2006" name="Mol. Syst. Biol.">
        <title>Highly accurate genome sequences of Escherichia coli K-12 strains MG1655 and W3110.</title>
        <authorList>
            <person name="Hayashi K."/>
            <person name="Morooka N."/>
            <person name="Yamamoto Y."/>
            <person name="Fujita K."/>
            <person name="Isono K."/>
            <person name="Choi S."/>
            <person name="Ohtsubo E."/>
            <person name="Baba T."/>
            <person name="Wanner B.L."/>
            <person name="Mori H."/>
            <person name="Horiuchi T."/>
        </authorList>
    </citation>
    <scope>NUCLEOTIDE SEQUENCE [LARGE SCALE GENOMIC DNA]</scope>
    <source>
        <strain>K12 / W3110 / ATCC 27325 / DSM 5911</strain>
    </source>
</reference>
<reference key="6">
    <citation type="journal article" date="1973" name="Eur. J. Biochem.">
        <title>The primary structure of an acidic protein from 50-S ribosomes of Escherichia coli which is involved in GTP hydrolysis dependent on elongation factors G and T.</title>
        <authorList>
            <person name="Terhorst C."/>
            <person name="Moeller W."/>
            <person name="Laursen R."/>
            <person name="Wittmann-Liebold B."/>
        </authorList>
    </citation>
    <scope>PROTEIN SEQUENCE OF 2-121</scope>
    <scope>ACETYLATION AT SER-2</scope>
    <scope>METHYLATION AT LYS-82</scope>
    <source>
        <strain>MRE-600</strain>
    </source>
</reference>
<reference key="7">
    <citation type="journal article" date="1976" name="FEBS Lett.">
        <title>The ribosomal protein L8 is a complex L7/L12 and L10.</title>
        <authorList>
            <person name="Pettersson I."/>
            <person name="Hardy S.J.S."/>
            <person name="Liljas A."/>
        </authorList>
    </citation>
    <scope>PROTEIN SEQUENCE OF 2-121</scope>
    <source>
        <strain>MRE-600</strain>
    </source>
</reference>
<reference key="8">
    <citation type="journal article" date="1997" name="Electrophoresis">
        <title>Comparing the predicted and observed properties of proteins encoded in the genome of Escherichia coli K-12.</title>
        <authorList>
            <person name="Link A.J."/>
            <person name="Robison K."/>
            <person name="Church G.M."/>
        </authorList>
    </citation>
    <scope>PROTEIN SEQUENCE OF 2-13</scope>
    <source>
        <strain>K12 / EMG2</strain>
    </source>
</reference>
<reference key="9">
    <citation type="journal article" date="1998" name="FEMS Microbiol. Lett.">
        <title>Small genes/gene-products in Escherichia coli K-12.</title>
        <authorList>
            <person name="Wasinger V.C."/>
            <person name="Humphery-Smith I."/>
        </authorList>
    </citation>
    <scope>PROTEIN SEQUENCE OF 2-11</scope>
    <source>
        <strain>K12</strain>
    </source>
</reference>
<reference key="10">
    <citation type="journal article" date="1998" name="J. Mol. Biol.">
        <title>Protein identification with N and C-terminal sequence tags in proteome projects.</title>
        <authorList>
            <person name="Wilkins M.R."/>
            <person name="Gasteiger E."/>
            <person name="Tonella L."/>
            <person name="Ou K."/>
            <person name="Tyler M."/>
            <person name="Sanchez J.-C."/>
            <person name="Gooley A.A."/>
            <person name="Walsh B.J."/>
            <person name="Bairoch A."/>
            <person name="Appel R.D."/>
            <person name="Williams K.L."/>
            <person name="Hochstrasser D.F."/>
        </authorList>
    </citation>
    <scope>PROTEIN SEQUENCE OF 2-5</scope>
    <source>
        <strain>K12 / W3110 / ATCC 27325 / DSM 5911</strain>
    </source>
</reference>
<reference key="11">
    <citation type="journal article" date="1979" name="Bioorg. Khim.">
        <title>The nucleotide sequence at the proximal end of rpoB gene of Escherichia coli.</title>
        <authorList>
            <person name="Gurevich A.I."/>
            <person name="Avakov A.E."/>
            <person name="Kolosov M.N."/>
        </authorList>
    </citation>
    <scope>NUCLEOTIDE SEQUENCE [GENOMIC DNA] OF 54-121</scope>
</reference>
<reference key="12">
    <citation type="journal article" date="1997" name="Electrophoresis">
        <title>Escherichia coli proteome analysis using the gene-protein database.</title>
        <authorList>
            <person name="VanBogelen R.A."/>
            <person name="Abshire K.Z."/>
            <person name="Moldover B."/>
            <person name="Olson E.R."/>
            <person name="Neidhardt F.C."/>
        </authorList>
    </citation>
    <scope>IDENTIFICATION BY 2D-GEL</scope>
</reference>
<reference key="13">
    <citation type="journal article" date="1999" name="Anal. Biochem.">
        <title>Observation of Escherichia coli ribosomal proteins and their posttranslational modifications by mass spectrometry.</title>
        <authorList>
            <person name="Arnold R.J."/>
            <person name="Reilly J.P."/>
        </authorList>
    </citation>
    <scope>MASS SPECTROMETRY</scope>
    <source>
        <strain>K12 / ATCC 25404 / DSM 5698 / NCIMB 11290</strain>
    </source>
</reference>
<reference key="14">
    <citation type="journal article" date="2005" name="Cell">
        <title>Structural basis for the function of the ribosomal L7/12 stalk in factor binding and GTPase activation.</title>
        <authorList>
            <person name="Diaconu M."/>
            <person name="Kothe U."/>
            <person name="Schlunzen F."/>
            <person name="Fischer N."/>
            <person name="Harms J.M."/>
            <person name="Tonevitsky A.G."/>
            <person name="Stark H."/>
            <person name="Rodnina M.V."/>
            <person name="Wahl M.C."/>
        </authorList>
    </citation>
    <scope>FUNCTION</scope>
    <scope>BINDING OF EF-TU AND EF-G</scope>
    <scope>SUBUNIT</scope>
    <scope>MUTAGENESIS OF LYS-66; VAL-67; ILE-70; LYS-71; ARG-74 AND LYS-85</scope>
</reference>
<reference key="15">
    <citation type="journal article" date="2005" name="Proc. Natl. Acad. Sci. U.S.A.">
        <title>Heptameric (L12)6/L10 rather than canonical pentameric complexes are found by tandem MS of intact ribosomes from thermophilic bacteria.</title>
        <authorList>
            <person name="Ilag L.L."/>
            <person name="Videler H."/>
            <person name="McKay A.R."/>
            <person name="Sobott F."/>
            <person name="Fucini P."/>
            <person name="Nierhaus K.H."/>
            <person name="Robinson C.V."/>
        </authorList>
    </citation>
    <scope>SUBUNIT</scope>
    <scope>STOICHIOMETRY</scope>
    <scope>MASS SPECTROMETRY</scope>
</reference>
<reference key="16">
    <citation type="journal article" date="2012" name="Nucleic Acids Res.">
        <title>Bacterial ribosome requires multiple L12 dimers for efficient initiation and elongation of protein synthesis involving IF2 and EF-G.</title>
        <authorList>
            <person name="Mandava C.S."/>
            <person name="Peisker K."/>
            <person name="Ederth J."/>
            <person name="Kumar R."/>
            <person name="Ge X."/>
            <person name="Szaflarski W."/>
            <person name="Sanyal S."/>
        </authorList>
    </citation>
    <scope>FUNCTION IN IF-2 (INFB) AND EF-G (FUSA) ASSOCIATION WITH RIBOSOME</scope>
    <source>
        <strain>K12 / MG1655 / ATCC 47076</strain>
    </source>
</reference>
<reference key="17">
    <citation type="journal article" date="2014" name="Curr. Opin. Struct. Biol.">
        <title>A new system for naming ribosomal proteins.</title>
        <authorList>
            <person name="Ban N."/>
            <person name="Beckmann R."/>
            <person name="Cate J.H.D."/>
            <person name="Dinman J.D."/>
            <person name="Dragon F."/>
            <person name="Ellis S.R."/>
            <person name="Lafontaine D.L.J."/>
            <person name="Lindahl L."/>
            <person name="Liljas A."/>
            <person name="Lipton J.M."/>
            <person name="McAlear M.A."/>
            <person name="Moore P.B."/>
            <person name="Noller H.F."/>
            <person name="Ortega J."/>
            <person name="Panse V.G."/>
            <person name="Ramakrishnan V."/>
            <person name="Spahn C.M.T."/>
            <person name="Steitz T.A."/>
            <person name="Tchorzewski M."/>
            <person name="Tollervey D."/>
            <person name="Warren A.J."/>
            <person name="Williamson J.R."/>
            <person name="Wilson D."/>
            <person name="Yonath A."/>
            <person name="Yusupov M."/>
        </authorList>
    </citation>
    <scope>NOMENCLATURE</scope>
</reference>
<reference key="18">
    <citation type="journal article" date="1987" name="J. Mol. Biol.">
        <title>Structure of the C-terminal domain of the ribosomal protein L7/L12 from Escherichia coli at 1.7 A.</title>
        <authorList>
            <person name="Leijonmarck M."/>
            <person name="Liljas A."/>
        </authorList>
    </citation>
    <scope>X-RAY CRYSTALLOGRAPHY (1.7 ANGSTROMS)</scope>
</reference>
<reference key="19">
    <citation type="journal article" date="1996" name="FEBS Lett.">
        <title>Topology of the secondary structure elements of ribosomal protein L7/L12 from E. coli in solution.</title>
        <authorList>
            <person name="Bocharov E.V."/>
            <person name="Gudkov A.T."/>
            <person name="Arseniev A.S."/>
        </authorList>
    </citation>
    <scope>STRUCTURE BY NMR</scope>
</reference>
<reference key="20">
    <citation type="journal article" date="1998" name="FEBS Lett.">
        <title>Conformational independence of N- and C-domains in ribosomal protein L7/L12 and in the complex with protein L10.</title>
        <authorList>
            <person name="Bocharov E.V."/>
            <person name="Gudkov A.T."/>
            <person name="Budovskaya E.V."/>
            <person name="Arseniev A.S."/>
        </authorList>
    </citation>
    <scope>STRUCTURE BY NMR</scope>
</reference>
<reference key="21">
    <citation type="journal article" date="2014" name="Cell Rep.">
        <title>Molecular basis for the ribosome functioning as an L-tryptophan sensor.</title>
        <authorList>
            <person name="Bischoff L."/>
            <person name="Berninghausen O."/>
            <person name="Beckmann R."/>
        </authorList>
    </citation>
    <scope>STRUCTURE BY ELECTRON MICROSCOPY (3.80 ANGSTROMS) OF 2-31 IN TNAC-STALLED 50S RIBOSOMAL SUBUNIT</scope>
    <source>
        <strain>K12 / A19 / KC6</strain>
    </source>
</reference>
<proteinExistence type="evidence at protein level"/>
<protein>
    <recommendedName>
        <fullName evidence="1 11">Large ribosomal subunit protein bL12</fullName>
    </recommendedName>
    <alternativeName>
        <fullName>50S ribosomal protein L7/L12</fullName>
    </alternativeName>
    <alternativeName>
        <fullName>L8</fullName>
    </alternativeName>
</protein>
<dbReference type="EMBL" id="V00339">
    <property type="protein sequence ID" value="CAA23624.1"/>
    <property type="molecule type" value="Genomic_DNA"/>
</dbReference>
<dbReference type="EMBL" id="M38301">
    <property type="protein sequence ID" value="AAA24573.1"/>
    <property type="molecule type" value="Genomic_DNA"/>
</dbReference>
<dbReference type="EMBL" id="U00006">
    <property type="protein sequence ID" value="AAC43084.1"/>
    <property type="molecule type" value="Genomic_DNA"/>
</dbReference>
<dbReference type="EMBL" id="U00096">
    <property type="protein sequence ID" value="AAC76960.1"/>
    <property type="molecule type" value="Genomic_DNA"/>
</dbReference>
<dbReference type="EMBL" id="AP009048">
    <property type="protein sequence ID" value="BAE77334.1"/>
    <property type="molecule type" value="Genomic_DNA"/>
</dbReference>
<dbReference type="PIR" id="S12575">
    <property type="entry name" value="R5EC7"/>
</dbReference>
<dbReference type="RefSeq" id="NP_418413.1">
    <property type="nucleotide sequence ID" value="NC_000913.3"/>
</dbReference>
<dbReference type="RefSeq" id="WP_000028878.1">
    <property type="nucleotide sequence ID" value="NZ_STEB01000045.1"/>
</dbReference>
<dbReference type="PDB" id="1CTF">
    <property type="method" value="X-ray"/>
    <property type="resolution" value="1.70 A"/>
    <property type="chains" value="A=48-121"/>
</dbReference>
<dbReference type="PDB" id="1RQS">
    <property type="method" value="NMR"/>
    <property type="chains" value="A=48-121"/>
</dbReference>
<dbReference type="PDB" id="1RQT">
    <property type="method" value="NMR"/>
    <property type="chains" value="A/B=2-38"/>
</dbReference>
<dbReference type="PDB" id="1RQU">
    <property type="method" value="NMR"/>
    <property type="chains" value="A/B=2-121"/>
</dbReference>
<dbReference type="PDB" id="1RQV">
    <property type="method" value="NMR"/>
    <property type="chains" value="A/B=2-121"/>
</dbReference>
<dbReference type="PDB" id="2BCW">
    <property type="method" value="EM"/>
    <property type="resolution" value="11.20 A"/>
    <property type="chains" value="B=54-121"/>
</dbReference>
<dbReference type="PDB" id="3J7Z">
    <property type="method" value="EM"/>
    <property type="resolution" value="3.90 A"/>
    <property type="chains" value="6=1-121"/>
</dbReference>
<dbReference type="PDB" id="4UY8">
    <property type="method" value="EM"/>
    <property type="resolution" value="3.80 A"/>
    <property type="chains" value="6=2-31"/>
</dbReference>
<dbReference type="PDB" id="4V4V">
    <property type="method" value="EM"/>
    <property type="resolution" value="15.00 A"/>
    <property type="chains" value="B3/B5=3-121"/>
</dbReference>
<dbReference type="PDB" id="4V4W">
    <property type="method" value="EM"/>
    <property type="resolution" value="15.00 A"/>
    <property type="chains" value="B3/B5=3-121"/>
</dbReference>
<dbReference type="PDB" id="4V5M">
    <property type="method" value="EM"/>
    <property type="resolution" value="7.80 A"/>
    <property type="chains" value="BL=1-121"/>
</dbReference>
<dbReference type="PDB" id="4V5N">
    <property type="method" value="EM"/>
    <property type="resolution" value="7.60 A"/>
    <property type="chains" value="BL=1-121"/>
</dbReference>
<dbReference type="PDB" id="4V7B">
    <property type="method" value="EM"/>
    <property type="resolution" value="6.80 A"/>
    <property type="chains" value="B6=1-121"/>
</dbReference>
<dbReference type="PDB" id="4V7D">
    <property type="method" value="EM"/>
    <property type="resolution" value="7.60 A"/>
    <property type="chains" value="AL=2-121"/>
</dbReference>
<dbReference type="PDB" id="4V85">
    <property type="method" value="X-ray"/>
    <property type="resolution" value="3.20 A"/>
    <property type="chains" value="BJ/BK/BL/BM=1-121"/>
</dbReference>
<dbReference type="PDB" id="4V89">
    <property type="method" value="X-ray"/>
    <property type="resolution" value="3.70 A"/>
    <property type="chains" value="BJ/BK/BL/BM=1-121"/>
</dbReference>
<dbReference type="PDB" id="4V9O">
    <property type="method" value="X-ray"/>
    <property type="resolution" value="2.90 A"/>
    <property type="chains" value="A6=1-121"/>
</dbReference>
<dbReference type="PDB" id="5KCS">
    <property type="method" value="EM"/>
    <property type="resolution" value="3.90 A"/>
    <property type="chains" value="1L=1-121"/>
</dbReference>
<dbReference type="PDB" id="6I0Y">
    <property type="method" value="EM"/>
    <property type="resolution" value="3.20 A"/>
    <property type="chains" value="6=1-121"/>
</dbReference>
<dbReference type="PDB" id="6VU3">
    <property type="method" value="EM"/>
    <property type="resolution" value="3.70 A"/>
    <property type="chains" value="Z=2-31"/>
</dbReference>
<dbReference type="PDB" id="6VYQ">
    <property type="method" value="EM"/>
    <property type="resolution" value="3.70 A"/>
    <property type="chains" value="Z=1-121"/>
</dbReference>
<dbReference type="PDB" id="6VYR">
    <property type="method" value="EM"/>
    <property type="resolution" value="3.80 A"/>
    <property type="chains" value="Z=1-121"/>
</dbReference>
<dbReference type="PDB" id="6VYS">
    <property type="method" value="EM"/>
    <property type="resolution" value="3.70 A"/>
    <property type="chains" value="Z=1-121"/>
</dbReference>
<dbReference type="PDB" id="6VZJ">
    <property type="method" value="EM"/>
    <property type="resolution" value="4.10 A"/>
    <property type="chains" value="Z=1-121"/>
</dbReference>
<dbReference type="PDB" id="6X6T">
    <property type="method" value="EM"/>
    <property type="resolution" value="3.20 A"/>
    <property type="chains" value="Z=1-121"/>
</dbReference>
<dbReference type="PDB" id="6X7F">
    <property type="method" value="EM"/>
    <property type="resolution" value="3.50 A"/>
    <property type="chains" value="Z=1-121"/>
</dbReference>
<dbReference type="PDB" id="6X7K">
    <property type="method" value="EM"/>
    <property type="resolution" value="3.10 A"/>
    <property type="chains" value="Z=1-121"/>
</dbReference>
<dbReference type="PDB" id="6X9Q">
    <property type="method" value="EM"/>
    <property type="resolution" value="4.80 A"/>
    <property type="chains" value="Z=1-121"/>
</dbReference>
<dbReference type="PDB" id="6XDQ">
    <property type="method" value="EM"/>
    <property type="resolution" value="3.70 A"/>
    <property type="chains" value="Z=1-121"/>
</dbReference>
<dbReference type="PDB" id="6XDR">
    <property type="method" value="EM"/>
    <property type="resolution" value="4.70 A"/>
    <property type="chains" value="Z=1-121"/>
</dbReference>
<dbReference type="PDB" id="6XGF">
    <property type="method" value="EM"/>
    <property type="resolution" value="5.00 A"/>
    <property type="chains" value="Z=1-121"/>
</dbReference>
<dbReference type="PDB" id="6XII">
    <property type="method" value="EM"/>
    <property type="resolution" value="7.00 A"/>
    <property type="chains" value="Z=1-121"/>
</dbReference>
<dbReference type="PDB" id="6XIJ">
    <property type="method" value="EM"/>
    <property type="resolution" value="8.00 A"/>
    <property type="chains" value="Z=1-121"/>
</dbReference>
<dbReference type="PDB" id="7N2C">
    <property type="method" value="EM"/>
    <property type="resolution" value="2.72 A"/>
    <property type="chains" value="LG=1-121"/>
</dbReference>
<dbReference type="PDB" id="8PHJ">
    <property type="method" value="EM"/>
    <property type="resolution" value="3.67 A"/>
    <property type="chains" value="W=2-121"/>
</dbReference>
<dbReference type="PDB" id="8UPO">
    <property type="method" value="EM"/>
    <property type="resolution" value="5.50 A"/>
    <property type="chains" value="Z=1-121"/>
</dbReference>
<dbReference type="PDB" id="8UPR">
    <property type="method" value="EM"/>
    <property type="resolution" value="5.30 A"/>
    <property type="chains" value="Z=1-121"/>
</dbReference>
<dbReference type="PDB" id="8UQL">
    <property type="method" value="EM"/>
    <property type="resolution" value="3.20 A"/>
    <property type="chains" value="Z=1-121"/>
</dbReference>
<dbReference type="PDB" id="8UQM">
    <property type="method" value="EM"/>
    <property type="resolution" value="5.30 A"/>
    <property type="chains" value="Z=1-121"/>
</dbReference>
<dbReference type="PDB" id="8UQP">
    <property type="method" value="EM"/>
    <property type="resolution" value="3.80 A"/>
    <property type="chains" value="Z=1-121"/>
</dbReference>
<dbReference type="PDB" id="8UR0">
    <property type="method" value="EM"/>
    <property type="resolution" value="3.40 A"/>
    <property type="chains" value="Z=1-121"/>
</dbReference>
<dbReference type="PDB" id="8URH">
    <property type="method" value="EM"/>
    <property type="resolution" value="5.70 A"/>
    <property type="chains" value="Z=1-121"/>
</dbReference>
<dbReference type="PDB" id="8URI">
    <property type="method" value="EM"/>
    <property type="resolution" value="5.30 A"/>
    <property type="chains" value="Z=1-121"/>
</dbReference>
<dbReference type="PDB" id="8URX">
    <property type="method" value="EM"/>
    <property type="resolution" value="6.60 A"/>
    <property type="chains" value="Z=1-121"/>
</dbReference>
<dbReference type="PDB" id="8URY">
    <property type="method" value="EM"/>
    <property type="resolution" value="3.10 A"/>
    <property type="chains" value="Z=1-121"/>
</dbReference>
<dbReference type="PDBsum" id="1CTF"/>
<dbReference type="PDBsum" id="1RQS"/>
<dbReference type="PDBsum" id="1RQT"/>
<dbReference type="PDBsum" id="1RQU"/>
<dbReference type="PDBsum" id="1RQV"/>
<dbReference type="PDBsum" id="2BCW"/>
<dbReference type="PDBsum" id="3J7Z"/>
<dbReference type="PDBsum" id="4UY8"/>
<dbReference type="PDBsum" id="4V4V"/>
<dbReference type="PDBsum" id="4V4W"/>
<dbReference type="PDBsum" id="4V5M"/>
<dbReference type="PDBsum" id="4V5N"/>
<dbReference type="PDBsum" id="4V7B"/>
<dbReference type="PDBsum" id="4V7D"/>
<dbReference type="PDBsum" id="4V85"/>
<dbReference type="PDBsum" id="4V89"/>
<dbReference type="PDBsum" id="4V9O"/>
<dbReference type="PDBsum" id="5KCS"/>
<dbReference type="PDBsum" id="6I0Y"/>
<dbReference type="PDBsum" id="6VU3"/>
<dbReference type="PDBsum" id="6VYQ"/>
<dbReference type="PDBsum" id="6VYR"/>
<dbReference type="PDBsum" id="6VYS"/>
<dbReference type="PDBsum" id="6VZJ"/>
<dbReference type="PDBsum" id="6X6T"/>
<dbReference type="PDBsum" id="6X7F"/>
<dbReference type="PDBsum" id="6X7K"/>
<dbReference type="PDBsum" id="6X9Q"/>
<dbReference type="PDBsum" id="6XDQ"/>
<dbReference type="PDBsum" id="6XDR"/>
<dbReference type="PDBsum" id="6XGF"/>
<dbReference type="PDBsum" id="6XII"/>
<dbReference type="PDBsum" id="6XIJ"/>
<dbReference type="PDBsum" id="7N2C"/>
<dbReference type="PDBsum" id="8PHJ"/>
<dbReference type="PDBsum" id="8UPO"/>
<dbReference type="PDBsum" id="8UPR"/>
<dbReference type="PDBsum" id="8UQL"/>
<dbReference type="PDBsum" id="8UQM"/>
<dbReference type="PDBsum" id="8UQP"/>
<dbReference type="PDBsum" id="8UR0"/>
<dbReference type="PDBsum" id="8URH"/>
<dbReference type="PDBsum" id="8URI"/>
<dbReference type="PDBsum" id="8URX"/>
<dbReference type="PDBsum" id="8URY"/>
<dbReference type="EMDB" id="EMD-0322"/>
<dbReference type="EMDB" id="EMD-17667"/>
<dbReference type="EMDB" id="EMD-24132"/>
<dbReference type="EMDB" id="EMD-8238"/>
<dbReference type="SMR" id="P0A7K2"/>
<dbReference type="BioGRID" id="4259506">
    <property type="interactions" value="2"/>
</dbReference>
<dbReference type="BioGRID" id="852783">
    <property type="interactions" value="8"/>
</dbReference>
<dbReference type="ComplexPortal" id="CPX-3807">
    <property type="entry name" value="50S large ribosomal subunit"/>
</dbReference>
<dbReference type="DIP" id="DIP-36009N"/>
<dbReference type="FunCoup" id="P0A7K2">
    <property type="interactions" value="1192"/>
</dbReference>
<dbReference type="IntAct" id="P0A7K2">
    <property type="interactions" value="135"/>
</dbReference>
<dbReference type="STRING" id="511145.b3986"/>
<dbReference type="iPTMnet" id="P0A7K2"/>
<dbReference type="MetOSite" id="P0A7K2"/>
<dbReference type="jPOST" id="P0A7K2"/>
<dbReference type="PaxDb" id="511145-b3986"/>
<dbReference type="EnsemblBacteria" id="AAC76960">
    <property type="protein sequence ID" value="AAC76960"/>
    <property type="gene ID" value="b3986"/>
</dbReference>
<dbReference type="GeneID" id="86944525"/>
<dbReference type="GeneID" id="948489"/>
<dbReference type="KEGG" id="ecj:JW3949"/>
<dbReference type="KEGG" id="eco:b3986"/>
<dbReference type="KEGG" id="ecoc:C3026_21530"/>
<dbReference type="PATRIC" id="fig|1411691.4.peg.2726"/>
<dbReference type="EchoBASE" id="EB0866"/>
<dbReference type="eggNOG" id="COG0222">
    <property type="taxonomic scope" value="Bacteria"/>
</dbReference>
<dbReference type="HOGENOM" id="CLU_086499_3_2_6"/>
<dbReference type="InParanoid" id="P0A7K2"/>
<dbReference type="OMA" id="LEDKWGV"/>
<dbReference type="OrthoDB" id="9811748at2"/>
<dbReference type="PhylomeDB" id="P0A7K2"/>
<dbReference type="BioCyc" id="EcoCyc:EG10873-MONOMER"/>
<dbReference type="BioCyc" id="MetaCyc:EG10873-MONOMER"/>
<dbReference type="EvolutionaryTrace" id="P0A7K2"/>
<dbReference type="PRO" id="PR:P0A7K2"/>
<dbReference type="Proteomes" id="UP000000625">
    <property type="component" value="Chromosome"/>
</dbReference>
<dbReference type="GO" id="GO:0005737">
    <property type="term" value="C:cytoplasm"/>
    <property type="evidence" value="ECO:0000314"/>
    <property type="project" value="ComplexPortal"/>
</dbReference>
<dbReference type="GO" id="GO:0005829">
    <property type="term" value="C:cytosol"/>
    <property type="evidence" value="ECO:0000314"/>
    <property type="project" value="EcoCyc"/>
</dbReference>
<dbReference type="GO" id="GO:0022625">
    <property type="term" value="C:cytosolic large ribosomal subunit"/>
    <property type="evidence" value="ECO:0000314"/>
    <property type="project" value="EcoliWiki"/>
</dbReference>
<dbReference type="GO" id="GO:0015934">
    <property type="term" value="C:large ribosomal subunit"/>
    <property type="evidence" value="ECO:0000314"/>
    <property type="project" value="CAFA"/>
</dbReference>
<dbReference type="GO" id="GO:0003729">
    <property type="term" value="F:mRNA binding"/>
    <property type="evidence" value="ECO:0000318"/>
    <property type="project" value="GO_Central"/>
</dbReference>
<dbReference type="GO" id="GO:0042803">
    <property type="term" value="F:protein homodimerization activity"/>
    <property type="evidence" value="ECO:0000314"/>
    <property type="project" value="CAFA"/>
</dbReference>
<dbReference type="GO" id="GO:0043022">
    <property type="term" value="F:ribosome binding"/>
    <property type="evidence" value="ECO:0000314"/>
    <property type="project" value="CAFA"/>
</dbReference>
<dbReference type="GO" id="GO:0003735">
    <property type="term" value="F:structural constituent of ribosome"/>
    <property type="evidence" value="ECO:0000318"/>
    <property type="project" value="GO_Central"/>
</dbReference>
<dbReference type="GO" id="GO:0002181">
    <property type="term" value="P:cytoplasmic translation"/>
    <property type="evidence" value="ECO:0000303"/>
    <property type="project" value="ComplexPortal"/>
</dbReference>
<dbReference type="GO" id="GO:0006412">
    <property type="term" value="P:translation"/>
    <property type="evidence" value="ECO:0000315"/>
    <property type="project" value="CAFA"/>
</dbReference>
<dbReference type="CDD" id="cd00387">
    <property type="entry name" value="Ribosomal_L7_L12"/>
    <property type="match status" value="1"/>
</dbReference>
<dbReference type="DisProt" id="DP01650"/>
<dbReference type="FunFam" id="1.20.5.710:FF:000001">
    <property type="entry name" value="50S ribosomal protein L7/L12"/>
    <property type="match status" value="1"/>
</dbReference>
<dbReference type="FunFam" id="3.30.1390.10:FF:000001">
    <property type="entry name" value="50S ribosomal protein L7/L12"/>
    <property type="match status" value="1"/>
</dbReference>
<dbReference type="Gene3D" id="3.30.1390.10">
    <property type="match status" value="1"/>
</dbReference>
<dbReference type="Gene3D" id="1.20.5.710">
    <property type="entry name" value="Single helix bin"/>
    <property type="match status" value="1"/>
</dbReference>
<dbReference type="HAMAP" id="MF_00368">
    <property type="entry name" value="Ribosomal_bL12"/>
    <property type="match status" value="1"/>
</dbReference>
<dbReference type="InterPro" id="IPR000206">
    <property type="entry name" value="Ribosomal_bL12"/>
</dbReference>
<dbReference type="InterPro" id="IPR013823">
    <property type="entry name" value="Ribosomal_bL12_C"/>
</dbReference>
<dbReference type="InterPro" id="IPR014719">
    <property type="entry name" value="Ribosomal_bL12_C/ClpS-like"/>
</dbReference>
<dbReference type="InterPro" id="IPR008932">
    <property type="entry name" value="Ribosomal_bL12_oligo"/>
</dbReference>
<dbReference type="InterPro" id="IPR036235">
    <property type="entry name" value="Ribosomal_bL12_oligo_N_sf"/>
</dbReference>
<dbReference type="NCBIfam" id="TIGR00855">
    <property type="entry name" value="L12"/>
    <property type="match status" value="1"/>
</dbReference>
<dbReference type="PANTHER" id="PTHR45987">
    <property type="entry name" value="39S RIBOSOMAL PROTEIN L12"/>
    <property type="match status" value="1"/>
</dbReference>
<dbReference type="PANTHER" id="PTHR45987:SF4">
    <property type="entry name" value="LARGE RIBOSOMAL SUBUNIT PROTEIN BL12M"/>
    <property type="match status" value="1"/>
</dbReference>
<dbReference type="Pfam" id="PF00542">
    <property type="entry name" value="Ribosomal_L12"/>
    <property type="match status" value="1"/>
</dbReference>
<dbReference type="Pfam" id="PF16320">
    <property type="entry name" value="Ribosomal_L12_N"/>
    <property type="match status" value="1"/>
</dbReference>
<dbReference type="SUPFAM" id="SSF54736">
    <property type="entry name" value="ClpS-like"/>
    <property type="match status" value="1"/>
</dbReference>
<dbReference type="SUPFAM" id="SSF48300">
    <property type="entry name" value="Ribosomal protein L7/12, oligomerisation (N-terminal) domain"/>
    <property type="match status" value="1"/>
</dbReference>
<feature type="initiator methionine" description="Removed" evidence="6 7 8 9 10">
    <location>
        <position position="1"/>
    </location>
</feature>
<feature type="chain" id="PRO_0000157528" description="Large ribosomal subunit protein bL12">
    <location>
        <begin position="2"/>
        <end position="121"/>
    </location>
</feature>
<feature type="region of interest" description="Required for recruitment of EF-Tu and EF-G, and for EF-Tu and EF-G-promoted GTP hydrolysis">
    <location>
        <begin position="54"/>
        <end position="121"/>
    </location>
</feature>
<feature type="modified residue" description="N-acetylserine; in L7" evidence="6">
    <location>
        <position position="2"/>
    </location>
</feature>
<feature type="modified residue" description="N6-methyllysine; partial" evidence="6">
    <location>
        <position position="82"/>
    </location>
</feature>
<feature type="mutagenesis site" description="EF-Tu-binding and EF-Tu-promoted GTP hydrolysis reduced." evidence="4">
    <original>K</original>
    <variation>A</variation>
    <location>
        <position position="66"/>
    </location>
</feature>
<feature type="mutagenesis site" description="EF-Tu-binding and EF-Tu-promoted GTP hydrolysis reduced." evidence="4">
    <original>V</original>
    <variation>D</variation>
    <location>
        <position position="67"/>
    </location>
</feature>
<feature type="mutagenesis site" description="EF-Tu-binding and EF-Tu-promoted GTP hydrolysis reduced." evidence="4">
    <original>I</original>
    <variation>A</variation>
    <location>
        <position position="70"/>
    </location>
</feature>
<feature type="mutagenesis site" description="EF-Tu-binding and EF-Tu-promoted GTP hydrolysis reduced." evidence="4">
    <original>K</original>
    <variation>A</variation>
    <location>
        <position position="71"/>
    </location>
</feature>
<feature type="mutagenesis site" description="EF-Tu-binding and EF-Tu-promoted GTP hydrolysis reduced." evidence="4">
    <original>R</original>
    <variation>M</variation>
    <location>
        <position position="74"/>
    </location>
</feature>
<feature type="mutagenesis site" description="EF-Tu-binding and EF-Tu-promoted GTP hydrolysis reduced." evidence="4">
    <original>K</original>
    <variation>A</variation>
    <location>
        <position position="85"/>
    </location>
</feature>
<feature type="sequence conflict" description="In Ref. 9; AA sequence." evidence="12" ref="9">
    <original>D</original>
    <variation>F</variation>
    <location>
        <position position="6"/>
    </location>
</feature>
<feature type="helix" evidence="15">
    <location>
        <begin position="5"/>
        <end position="7"/>
    </location>
</feature>
<feature type="strand" evidence="15">
    <location>
        <begin position="9"/>
        <end position="13"/>
    </location>
</feature>
<feature type="helix" evidence="15">
    <location>
        <begin position="17"/>
        <end position="20"/>
    </location>
</feature>
<feature type="strand" evidence="15">
    <location>
        <begin position="23"/>
        <end position="25"/>
    </location>
</feature>
<feature type="helix" evidence="15">
    <location>
        <begin position="26"/>
        <end position="29"/>
    </location>
</feature>
<feature type="helix" evidence="14">
    <location>
        <begin position="33"/>
        <end position="50"/>
    </location>
</feature>
<feature type="strand" evidence="13">
    <location>
        <begin position="55"/>
        <end position="61"/>
    </location>
</feature>
<feature type="helix" evidence="13">
    <location>
        <begin position="63"/>
        <end position="65"/>
    </location>
</feature>
<feature type="helix" evidence="13">
    <location>
        <begin position="66"/>
        <end position="77"/>
    </location>
</feature>
<feature type="helix" evidence="13">
    <location>
        <begin position="81"/>
        <end position="89"/>
    </location>
</feature>
<feature type="strand" evidence="13">
    <location>
        <begin position="92"/>
        <end position="99"/>
    </location>
</feature>
<feature type="helix" evidence="13">
    <location>
        <begin position="101"/>
        <end position="114"/>
    </location>
</feature>
<feature type="strand" evidence="13">
    <location>
        <begin position="117"/>
        <end position="121"/>
    </location>
</feature>
<sequence>MSITKDQIIEAVAAMSVMDVVELISAMEEKFGVSAAAAVAVAAGPVEAAEEKTEFDVILKAAGANKVAVIKAVRGATGLGLKEAKDLVESAPAALKEGVSKDDAEALKKALEEAGAEVEVK</sequence>
<organism>
    <name type="scientific">Escherichia coli (strain K12)</name>
    <dbReference type="NCBI Taxonomy" id="83333"/>
    <lineage>
        <taxon>Bacteria</taxon>
        <taxon>Pseudomonadati</taxon>
        <taxon>Pseudomonadota</taxon>
        <taxon>Gammaproteobacteria</taxon>
        <taxon>Enterobacterales</taxon>
        <taxon>Enterobacteriaceae</taxon>
        <taxon>Escherichia</taxon>
    </lineage>
</organism>
<evidence type="ECO:0000255" key="1">
    <source>
        <dbReference type="HAMAP-Rule" id="MF_00368"/>
    </source>
</evidence>
<evidence type="ECO:0000269" key="2">
    <source>
    </source>
</evidence>
<evidence type="ECO:0000269" key="3">
    <source>
    </source>
</evidence>
<evidence type="ECO:0000269" key="4">
    <source>
    </source>
</evidence>
<evidence type="ECO:0000269" key="5">
    <source>
    </source>
</evidence>
<evidence type="ECO:0000269" key="6">
    <source>
    </source>
</evidence>
<evidence type="ECO:0000269" key="7">
    <source>
    </source>
</evidence>
<evidence type="ECO:0000269" key="8">
    <source>
    </source>
</evidence>
<evidence type="ECO:0000269" key="9">
    <source>
    </source>
</evidence>
<evidence type="ECO:0000269" key="10">
    <source>
    </source>
</evidence>
<evidence type="ECO:0000303" key="11">
    <source>
    </source>
</evidence>
<evidence type="ECO:0000305" key="12"/>
<evidence type="ECO:0007829" key="13">
    <source>
        <dbReference type="PDB" id="1CTF"/>
    </source>
</evidence>
<evidence type="ECO:0007829" key="14">
    <source>
        <dbReference type="PDB" id="1RQV"/>
    </source>
</evidence>
<evidence type="ECO:0007829" key="15">
    <source>
        <dbReference type="PDB" id="6I0Y"/>
    </source>
</evidence>
<accession>P0A7K2</accession>
<accession>P02392</accession>
<accession>Q2M8S2</accession>